<evidence type="ECO:0000255" key="1">
    <source>
        <dbReference type="HAMAP-Rule" id="MF_00265"/>
    </source>
</evidence>
<evidence type="ECO:0000269" key="2">
    <source>
    </source>
</evidence>
<proteinExistence type="evidence at protein level"/>
<gene>
    <name evidence="1" type="primary">vapC1</name>
    <name type="ordered locus">R2866_0251</name>
</gene>
<protein>
    <recommendedName>
        <fullName evidence="1">Ribonuclease VapC1</fullName>
        <shortName evidence="1">RNase VapC1</shortName>
        <ecNumber evidence="1">3.1.-.-</ecNumber>
    </recommendedName>
    <alternativeName>
        <fullName evidence="1">Toxin VapC1</fullName>
    </alternativeName>
</protein>
<reference key="1">
    <citation type="submission" date="2010-10" db="EMBL/GenBank/DDBJ databases">
        <title>Genome sequence of the invasive non-typeable isolate Haemophilus influenzae R2866.</title>
        <authorList>
            <person name="VanWagoner T.M."/>
            <person name="Erwin A.L."/>
            <person name="Kaul R."/>
            <person name="Mahaffey M."/>
            <person name="Zhou Y."/>
            <person name="Aggarwal G."/>
            <person name="Chang J."/>
            <person name="Deng H."/>
            <person name="Gillett W."/>
            <person name="Haugen E."/>
            <person name="Kibukawa M."/>
            <person name="Phelps K."/>
            <person name="Saenphimmachak C."/>
            <person name="Sivam D."/>
            <person name="Worthey E.A."/>
            <person name="Olson M.V."/>
            <person name="Stull T.L."/>
            <person name="Smith A.L."/>
        </authorList>
    </citation>
    <scope>NUCLEOTIDE SEQUENCE [LARGE SCALE GENOMIC DNA]</scope>
    <source>
        <strain>R2866</strain>
    </source>
</reference>
<reference key="2">
    <citation type="journal article" date="2007" name="J. Bacteriol.">
        <title>VapC-1 of nontypeable Haemophilus influenzae is a ribonuclease.</title>
        <authorList>
            <person name="Daines D.A."/>
            <person name="Wu M.H."/>
            <person name="Yuan S.Y."/>
        </authorList>
    </citation>
    <scope>EXPRESSION IN E.COLI</scope>
    <scope>FUNCTION AS AN RNASE TOXIN</scope>
    <scope>SUBUNIT</scope>
    <scope>INDUCTION</scope>
    <scope>OPERON STRUCTURE</scope>
    <source>
        <strain>R2866</strain>
    </source>
</reference>
<accession>E4QWH2</accession>
<keyword id="KW-0378">Hydrolase</keyword>
<keyword id="KW-0460">Magnesium</keyword>
<keyword id="KW-0479">Metal-binding</keyword>
<keyword id="KW-0540">Nuclease</keyword>
<keyword id="KW-1277">Toxin-antitoxin system</keyword>
<sequence length="134" mass="15692">MIYMLDTNIIIYLMKNRPKIIAERVSQLLPNDRLVMSFITYAELIKGAFGSQNYEQSIRAIELLTERVNVLYPNEQICLHYGKWANTLKKQGRPIGNNDLWIACHALSLNAVLITHNVKEFQRITDLQWQDWTK</sequence>
<comment type="function">
    <text evidence="2">Toxic component of a type II toxin-antitoxin (TA) system. Upon expression in E.coli inhibits growth in liquid culture. Its toxic effect is neutralized by coexpression with antitoxin VapB1. Degrades RNA but not ss- or ds-DNA in vitro, degradation is inhibited by VapB1 antitoxin.</text>
</comment>
<comment type="cofactor">
    <cofactor evidence="1">
        <name>Mg(2+)</name>
        <dbReference type="ChEBI" id="CHEBI:18420"/>
    </cofactor>
</comment>
<comment type="subunit">
    <text evidence="2">Forms a complex with VapB1.</text>
</comment>
<comment type="induction">
    <text evidence="2">More highly expressed in early growth phase, expression decreases as cell density increases. Part of the vapB1-vapC1 operon.</text>
</comment>
<comment type="similarity">
    <text evidence="1">Belongs to the PINc/VapC protein family.</text>
</comment>
<feature type="chain" id="PRO_0000407863" description="Ribonuclease VapC1">
    <location>
        <begin position="1"/>
        <end position="134"/>
    </location>
</feature>
<feature type="domain" description="PINc" evidence="1">
    <location>
        <begin position="3"/>
        <end position="132"/>
    </location>
</feature>
<feature type="binding site" evidence="1">
    <location>
        <position position="6"/>
    </location>
    <ligand>
        <name>Mg(2+)</name>
        <dbReference type="ChEBI" id="CHEBI:18420"/>
    </ligand>
</feature>
<feature type="binding site" evidence="1">
    <location>
        <position position="99"/>
    </location>
    <ligand>
        <name>Mg(2+)</name>
        <dbReference type="ChEBI" id="CHEBI:18420"/>
    </ligand>
</feature>
<dbReference type="EC" id="3.1.-.-" evidence="1"/>
<dbReference type="EMBL" id="CP002277">
    <property type="protein sequence ID" value="ADO80240.1"/>
    <property type="molecule type" value="Genomic_DNA"/>
</dbReference>
<dbReference type="RefSeq" id="WP_005649049.1">
    <property type="nucleotide sequence ID" value="NC_017451.1"/>
</dbReference>
<dbReference type="SMR" id="E4QWH2"/>
<dbReference type="KEGG" id="hiz:R2866_0251"/>
<dbReference type="PATRIC" id="fig|262728.6.peg.258"/>
<dbReference type="HOGENOM" id="CLU_118482_5_0_6"/>
<dbReference type="GO" id="GO:0000287">
    <property type="term" value="F:magnesium ion binding"/>
    <property type="evidence" value="ECO:0007669"/>
    <property type="project" value="UniProtKB-UniRule"/>
</dbReference>
<dbReference type="GO" id="GO:0004540">
    <property type="term" value="F:RNA nuclease activity"/>
    <property type="evidence" value="ECO:0007669"/>
    <property type="project" value="InterPro"/>
</dbReference>
<dbReference type="CDD" id="cd18735">
    <property type="entry name" value="PIN_HiVapC1-like"/>
    <property type="match status" value="1"/>
</dbReference>
<dbReference type="FunFam" id="3.40.50.1010:FF:000107">
    <property type="entry name" value="Ribonuclease VapC1"/>
    <property type="match status" value="1"/>
</dbReference>
<dbReference type="Gene3D" id="3.40.50.1010">
    <property type="entry name" value="5'-nuclease"/>
    <property type="match status" value="1"/>
</dbReference>
<dbReference type="HAMAP" id="MF_00265">
    <property type="entry name" value="VapC_Nob1"/>
    <property type="match status" value="1"/>
</dbReference>
<dbReference type="InterPro" id="IPR029060">
    <property type="entry name" value="PIN-like_dom_sf"/>
</dbReference>
<dbReference type="InterPro" id="IPR002716">
    <property type="entry name" value="PIN_dom"/>
</dbReference>
<dbReference type="InterPro" id="IPR050556">
    <property type="entry name" value="Type_II_TA_system_RNase"/>
</dbReference>
<dbReference type="InterPro" id="IPR022907">
    <property type="entry name" value="VapC_family"/>
</dbReference>
<dbReference type="PANTHER" id="PTHR33653">
    <property type="entry name" value="RIBONUCLEASE VAPC2"/>
    <property type="match status" value="1"/>
</dbReference>
<dbReference type="PANTHER" id="PTHR33653:SF1">
    <property type="entry name" value="RIBONUCLEASE VAPC2"/>
    <property type="match status" value="1"/>
</dbReference>
<dbReference type="Pfam" id="PF01850">
    <property type="entry name" value="PIN"/>
    <property type="match status" value="1"/>
</dbReference>
<dbReference type="SUPFAM" id="SSF88723">
    <property type="entry name" value="PIN domain-like"/>
    <property type="match status" value="1"/>
</dbReference>
<name>VAPC1_HAEI6</name>
<organism>
    <name type="scientific">Haemophilus influenzae (strain R2866)</name>
    <dbReference type="NCBI Taxonomy" id="262728"/>
    <lineage>
        <taxon>Bacteria</taxon>
        <taxon>Pseudomonadati</taxon>
        <taxon>Pseudomonadota</taxon>
        <taxon>Gammaproteobacteria</taxon>
        <taxon>Pasteurellales</taxon>
        <taxon>Pasteurellaceae</taxon>
        <taxon>Haemophilus</taxon>
    </lineage>
</organism>